<comment type="subcellular location">
    <subcellularLocation>
        <location evidence="1">Cell membrane</location>
        <topology evidence="1">Multi-pass membrane protein</topology>
    </subcellularLocation>
</comment>
<comment type="similarity">
    <text evidence="1">Belongs to the UPF0182 family.</text>
</comment>
<organism>
    <name type="scientific">Synechococcus elongatus (strain ATCC 33912 / PCC 7942 / FACHB-805)</name>
    <name type="common">Anacystis nidulans R2</name>
    <dbReference type="NCBI Taxonomy" id="1140"/>
    <lineage>
        <taxon>Bacteria</taxon>
        <taxon>Bacillati</taxon>
        <taxon>Cyanobacteriota</taxon>
        <taxon>Cyanophyceae</taxon>
        <taxon>Synechococcales</taxon>
        <taxon>Synechococcaceae</taxon>
        <taxon>Synechococcus</taxon>
    </lineage>
</organism>
<sequence>MPRHLSRWGLAIAAIALGLSLLTRIHIETLWFTALGIPTVFLRRLAVQALLFSVVGIAITGLIGGNLRWAARHQTDQPDRPAPRLQLGGLLTVLTLLWIALLALTTQAILAAWNCQTGRALPFLPQILTLDWLQSSLITAGSWPLGMGLLLGVGSLVLFLWRPWPLLIGLSSLTSLAIALLTSREWLRIWPAFAAESVSDRDPIFQQDLAFYLFRLPALEVLQFDLWIGLAFSFCAVLAVYYLAKQSVSNAEFRGFAPSQQRHLVRLAIAIALFLAGHCWLAQRQLLFSELGAVYGIGFTDRWVKLPLLQVWMILFGIAAIALFWQSRRGLLPQRWIRNFQLAAIASVLIWVTLPAIVQQLVVQPNEIARELPYLKQAILFTRRAFGLDQIETRTFDPQPSLNRAVLAANRETVQNIRLWDTRPLLQSNRQLQQIRLYYSFPSAQIDRYRLQTSFGDALQQVIIAARELDYTAIPAAAKTWVNEHLVYTHGYGFTLSPVNSSAPDGLPRYFVKDIGANTRIIGDASLGISTEAVKAAISTENPRIYYGQLTRNYVFTPSRTQELDYPSGNDNVYNIYDGKGGVTLGNYAQRLLFSLYLRDWRLPFSGDLTAQTRVLFRRQIEDRVRAIAPFLRYDAEPYLVSVNADTAEASGLGRSSLFWILDAYTVSDRYPYADPGEQPFNYIRNSVKVIIDAYNGSVQFYIVDPKDPLIQTWSRLFPSLFQPIDAMAPVLRSHLRYPTDLFKAQSSQLLTYHVLDPQVFYNRDDQWAYPREIYAGETATVQPYYLITRLPTAASEEFLILTPFTPLGRNNMIAWLAGRSDGEEYGRLLLYEFPRQRLIFGPEQITARINQDPQISEQITLWNREGSRAAEGNLLVIPIDQALLYVEPLYLEASRNSLPALTRVITAYQDRIVMTPSLLESLQKLFPDSTPALTPLEQPVLTTEQSAVLNPDQP</sequence>
<protein>
    <recommendedName>
        <fullName evidence="1">UPF0182 protein Synpcc7942_1783</fullName>
    </recommendedName>
</protein>
<evidence type="ECO:0000255" key="1">
    <source>
        <dbReference type="HAMAP-Rule" id="MF_01600"/>
    </source>
</evidence>
<dbReference type="EMBL" id="CP000100">
    <property type="protein sequence ID" value="ABB57813.1"/>
    <property type="molecule type" value="Genomic_DNA"/>
</dbReference>
<dbReference type="RefSeq" id="WP_011244620.1">
    <property type="nucleotide sequence ID" value="NZ_JACJTX010000001.1"/>
</dbReference>
<dbReference type="STRING" id="1140.Synpcc7942_1783"/>
<dbReference type="PaxDb" id="1140-Synpcc7942_1783"/>
<dbReference type="KEGG" id="syf:Synpcc7942_1783"/>
<dbReference type="eggNOG" id="COG1615">
    <property type="taxonomic scope" value="Bacteria"/>
</dbReference>
<dbReference type="HOGENOM" id="CLU_007733_0_0_3"/>
<dbReference type="OrthoDB" id="9763654at2"/>
<dbReference type="BioCyc" id="SYNEL:SYNPCC7942_1783-MONOMER"/>
<dbReference type="Proteomes" id="UP000889800">
    <property type="component" value="Chromosome"/>
</dbReference>
<dbReference type="GO" id="GO:0005576">
    <property type="term" value="C:extracellular region"/>
    <property type="evidence" value="ECO:0007669"/>
    <property type="project" value="TreeGrafter"/>
</dbReference>
<dbReference type="GO" id="GO:0005886">
    <property type="term" value="C:plasma membrane"/>
    <property type="evidence" value="ECO:0007669"/>
    <property type="project" value="UniProtKB-SubCell"/>
</dbReference>
<dbReference type="HAMAP" id="MF_01600">
    <property type="entry name" value="UPF0182"/>
    <property type="match status" value="1"/>
</dbReference>
<dbReference type="InterPro" id="IPR005372">
    <property type="entry name" value="UPF0182"/>
</dbReference>
<dbReference type="NCBIfam" id="NF002707">
    <property type="entry name" value="PRK02509.1"/>
    <property type="match status" value="1"/>
</dbReference>
<dbReference type="PANTHER" id="PTHR39344">
    <property type="entry name" value="UPF0182 PROTEIN SLL1060"/>
    <property type="match status" value="1"/>
</dbReference>
<dbReference type="PANTHER" id="PTHR39344:SF1">
    <property type="entry name" value="UPF0182 PROTEIN SLL1060"/>
    <property type="match status" value="1"/>
</dbReference>
<dbReference type="Pfam" id="PF03699">
    <property type="entry name" value="UPF0182"/>
    <property type="match status" value="1"/>
</dbReference>
<name>Y1783_SYNE7</name>
<reference key="1">
    <citation type="submission" date="2005-08" db="EMBL/GenBank/DDBJ databases">
        <title>Complete sequence of chromosome 1 of Synechococcus elongatus PCC 7942.</title>
        <authorList>
            <consortium name="US DOE Joint Genome Institute"/>
            <person name="Copeland A."/>
            <person name="Lucas S."/>
            <person name="Lapidus A."/>
            <person name="Barry K."/>
            <person name="Detter J.C."/>
            <person name="Glavina T."/>
            <person name="Hammon N."/>
            <person name="Israni S."/>
            <person name="Pitluck S."/>
            <person name="Schmutz J."/>
            <person name="Larimer F."/>
            <person name="Land M."/>
            <person name="Kyrpides N."/>
            <person name="Lykidis A."/>
            <person name="Golden S."/>
            <person name="Richardson P."/>
        </authorList>
    </citation>
    <scope>NUCLEOTIDE SEQUENCE [LARGE SCALE GENOMIC DNA]</scope>
    <source>
        <strain>ATCC 33912 / PCC 7942 / FACHB-805</strain>
    </source>
</reference>
<feature type="chain" id="PRO_0000291300" description="UPF0182 protein Synpcc7942_1783">
    <location>
        <begin position="1"/>
        <end position="955"/>
    </location>
</feature>
<feature type="transmembrane region" description="Helical" evidence="1">
    <location>
        <begin position="12"/>
        <end position="32"/>
    </location>
</feature>
<feature type="transmembrane region" description="Helical" evidence="1">
    <location>
        <begin position="45"/>
        <end position="65"/>
    </location>
</feature>
<feature type="transmembrane region" description="Helical" evidence="1">
    <location>
        <begin position="85"/>
        <end position="105"/>
    </location>
</feature>
<feature type="transmembrane region" description="Helical" evidence="1">
    <location>
        <begin position="141"/>
        <end position="161"/>
    </location>
</feature>
<feature type="transmembrane region" description="Helical" evidence="1">
    <location>
        <begin position="163"/>
        <end position="183"/>
    </location>
</feature>
<feature type="transmembrane region" description="Helical" evidence="1">
    <location>
        <begin position="224"/>
        <end position="244"/>
    </location>
</feature>
<feature type="transmembrane region" description="Helical" evidence="1">
    <location>
        <begin position="263"/>
        <end position="283"/>
    </location>
</feature>
<feature type="transmembrane region" description="Helical" evidence="1">
    <location>
        <begin position="306"/>
        <end position="326"/>
    </location>
</feature>
<feature type="transmembrane region" description="Helical" evidence="1">
    <location>
        <begin position="343"/>
        <end position="363"/>
    </location>
</feature>
<accession>Q31MA6</accession>
<gene>
    <name type="ordered locus">Synpcc7942_1783</name>
</gene>
<keyword id="KW-1003">Cell membrane</keyword>
<keyword id="KW-0472">Membrane</keyword>
<keyword id="KW-1185">Reference proteome</keyword>
<keyword id="KW-0812">Transmembrane</keyword>
<keyword id="KW-1133">Transmembrane helix</keyword>
<proteinExistence type="inferred from homology"/>